<protein>
    <recommendedName>
        <fullName evidence="1">ATP-dependent 6-phosphofructokinase 1</fullName>
        <shortName evidence="1">ATP-PFK 1</shortName>
        <shortName evidence="1">Phosphofructokinase 1</shortName>
        <ecNumber evidence="1">2.7.1.11</ecNumber>
    </recommendedName>
    <alternativeName>
        <fullName evidence="1">Phosphohexokinase 1</fullName>
    </alternativeName>
</protein>
<name>PFKA1_CAEEL</name>
<accession>Q9TZL8</accession>
<accession>Q95X24</accession>
<keyword id="KW-0021">Allosteric enzyme</keyword>
<keyword id="KW-0067">ATP-binding</keyword>
<keyword id="KW-0963">Cytoplasm</keyword>
<keyword id="KW-0324">Glycolysis</keyword>
<keyword id="KW-0418">Kinase</keyword>
<keyword id="KW-0460">Magnesium</keyword>
<keyword id="KW-0479">Metal-binding</keyword>
<keyword id="KW-0547">Nucleotide-binding</keyword>
<keyword id="KW-1185">Reference proteome</keyword>
<keyword id="KW-0808">Transferase</keyword>
<organism>
    <name type="scientific">Caenorhabditis elegans</name>
    <dbReference type="NCBI Taxonomy" id="6239"/>
    <lineage>
        <taxon>Eukaryota</taxon>
        <taxon>Metazoa</taxon>
        <taxon>Ecdysozoa</taxon>
        <taxon>Nematoda</taxon>
        <taxon>Chromadorea</taxon>
        <taxon>Rhabditida</taxon>
        <taxon>Rhabditina</taxon>
        <taxon>Rhabditomorpha</taxon>
        <taxon>Rhabditoidea</taxon>
        <taxon>Rhabditidae</taxon>
        <taxon>Peloderinae</taxon>
        <taxon>Caenorhabditis</taxon>
    </lineage>
</organism>
<gene>
    <name evidence="2" type="primary">pfk-1.1</name>
    <name evidence="2" type="ORF">Y71H10A.1</name>
</gene>
<dbReference type="EC" id="2.7.1.11" evidence="1"/>
<dbReference type="EMBL" id="FO081433">
    <property type="protein sequence ID" value="CCD71595.1"/>
    <property type="molecule type" value="Genomic_DNA"/>
</dbReference>
<dbReference type="PIR" id="T33481">
    <property type="entry name" value="T33481"/>
</dbReference>
<dbReference type="RefSeq" id="NP_741738.1">
    <property type="nucleotide sequence ID" value="NM_171643.6"/>
</dbReference>
<dbReference type="SMR" id="Q9TZL8"/>
<dbReference type="BioGRID" id="45527">
    <property type="interactions" value="14"/>
</dbReference>
<dbReference type="FunCoup" id="Q9TZL8">
    <property type="interactions" value="1168"/>
</dbReference>
<dbReference type="STRING" id="6239.Y71H10A.1a.1"/>
<dbReference type="PaxDb" id="6239-Y71H10A.1a"/>
<dbReference type="PeptideAtlas" id="Q9TZL8"/>
<dbReference type="EnsemblMetazoa" id="Y71H10A.1a.1">
    <property type="protein sequence ID" value="Y71H10A.1a.1"/>
    <property type="gene ID" value="WBGene00022199"/>
</dbReference>
<dbReference type="GeneID" id="180583"/>
<dbReference type="KEGG" id="cel:CELE_Y71H10A.1"/>
<dbReference type="UCSC" id="Y71H10A.1b.3">
    <property type="organism name" value="c. elegans"/>
</dbReference>
<dbReference type="AGR" id="WB:WBGene00022199"/>
<dbReference type="CTD" id="180583"/>
<dbReference type="WormBase" id="Y71H10A.1a">
    <property type="protein sequence ID" value="CE28266"/>
    <property type="gene ID" value="WBGene00022199"/>
    <property type="gene designation" value="pfk-1.1"/>
</dbReference>
<dbReference type="eggNOG" id="KOG2440">
    <property type="taxonomic scope" value="Eukaryota"/>
</dbReference>
<dbReference type="GeneTree" id="ENSGT00940000171778"/>
<dbReference type="HOGENOM" id="CLU_011053_0_0_1"/>
<dbReference type="InParanoid" id="Q9TZL8"/>
<dbReference type="OMA" id="EWQDQMC"/>
<dbReference type="OrthoDB" id="537915at2759"/>
<dbReference type="PhylomeDB" id="Q9TZL8"/>
<dbReference type="Reactome" id="R-CEL-6798695">
    <property type="pathway name" value="Neutrophil degranulation"/>
</dbReference>
<dbReference type="Reactome" id="R-CEL-70171">
    <property type="pathway name" value="Glycolysis"/>
</dbReference>
<dbReference type="UniPathway" id="UPA00109">
    <property type="reaction ID" value="UER00182"/>
</dbReference>
<dbReference type="CD-CODE" id="7A5BD188">
    <property type="entry name" value="PFK-1.1 condensates"/>
</dbReference>
<dbReference type="PRO" id="PR:Q9TZL8"/>
<dbReference type="Proteomes" id="UP000001940">
    <property type="component" value="Chromosome X"/>
</dbReference>
<dbReference type="Bgee" id="WBGene00022199">
    <property type="expression patterns" value="Expressed in material anatomical entity and 5 other cell types or tissues"/>
</dbReference>
<dbReference type="GO" id="GO:0005945">
    <property type="term" value="C:6-phosphofructokinase complex"/>
    <property type="evidence" value="ECO:0000318"/>
    <property type="project" value="GO_Central"/>
</dbReference>
<dbReference type="GO" id="GO:0003872">
    <property type="term" value="F:6-phosphofructokinase activity"/>
    <property type="evidence" value="ECO:0000318"/>
    <property type="project" value="GO_Central"/>
</dbReference>
<dbReference type="GO" id="GO:0005524">
    <property type="term" value="F:ATP binding"/>
    <property type="evidence" value="ECO:0007669"/>
    <property type="project" value="UniProtKB-KW"/>
</dbReference>
<dbReference type="GO" id="GO:0070095">
    <property type="term" value="F:fructose-6-phosphate binding"/>
    <property type="evidence" value="ECO:0000318"/>
    <property type="project" value="GO_Central"/>
</dbReference>
<dbReference type="GO" id="GO:0046872">
    <property type="term" value="F:metal ion binding"/>
    <property type="evidence" value="ECO:0007669"/>
    <property type="project" value="UniProtKB-KW"/>
</dbReference>
<dbReference type="GO" id="GO:0061621">
    <property type="term" value="P:canonical glycolysis"/>
    <property type="evidence" value="ECO:0000318"/>
    <property type="project" value="GO_Central"/>
</dbReference>
<dbReference type="GO" id="GO:0030388">
    <property type="term" value="P:fructose 1,6-bisphosphate metabolic process"/>
    <property type="evidence" value="ECO:0000318"/>
    <property type="project" value="GO_Central"/>
</dbReference>
<dbReference type="GO" id="GO:0006002">
    <property type="term" value="P:fructose 6-phosphate metabolic process"/>
    <property type="evidence" value="ECO:0000318"/>
    <property type="project" value="GO_Central"/>
</dbReference>
<dbReference type="FunFam" id="3.40.50.460:FF:000003">
    <property type="entry name" value="ATP-dependent 6-phosphofructokinase"/>
    <property type="match status" value="1"/>
</dbReference>
<dbReference type="FunFam" id="3.40.50.460:FF:000008">
    <property type="entry name" value="ATP-dependent 6-phosphofructokinase"/>
    <property type="match status" value="1"/>
</dbReference>
<dbReference type="FunFam" id="3.40.50.450:FF:000043">
    <property type="entry name" value="ATP-dependent 6-phosphofructokinase, platelet type"/>
    <property type="match status" value="1"/>
</dbReference>
<dbReference type="FunFam" id="3.40.50.450:FF:000064">
    <property type="entry name" value="Phosphofructokinase, platelet b"/>
    <property type="match status" value="1"/>
</dbReference>
<dbReference type="Gene3D" id="3.40.50.450">
    <property type="match status" value="2"/>
</dbReference>
<dbReference type="Gene3D" id="3.40.50.460">
    <property type="entry name" value="Phosphofructokinase domain"/>
    <property type="match status" value="2"/>
</dbReference>
<dbReference type="HAMAP" id="MF_03184">
    <property type="entry name" value="Phosphofructokinase_I_E"/>
    <property type="match status" value="1"/>
</dbReference>
<dbReference type="InterPro" id="IPR009161">
    <property type="entry name" value="6-Pfructokinase_euk"/>
</dbReference>
<dbReference type="InterPro" id="IPR022953">
    <property type="entry name" value="ATP_PFK"/>
</dbReference>
<dbReference type="InterPro" id="IPR015912">
    <property type="entry name" value="Phosphofructokinase_CS"/>
</dbReference>
<dbReference type="InterPro" id="IPR000023">
    <property type="entry name" value="Phosphofructokinase_dom"/>
</dbReference>
<dbReference type="InterPro" id="IPR035966">
    <property type="entry name" value="PKF_sf"/>
</dbReference>
<dbReference type="NCBIfam" id="TIGR02478">
    <property type="entry name" value="6PF1K_euk"/>
    <property type="match status" value="1"/>
</dbReference>
<dbReference type="PANTHER" id="PTHR13697:SF4">
    <property type="entry name" value="ATP-DEPENDENT 6-PHOSPHOFRUCTOKINASE"/>
    <property type="match status" value="1"/>
</dbReference>
<dbReference type="PANTHER" id="PTHR13697">
    <property type="entry name" value="PHOSPHOFRUCTOKINASE"/>
    <property type="match status" value="1"/>
</dbReference>
<dbReference type="Pfam" id="PF00365">
    <property type="entry name" value="PFK"/>
    <property type="match status" value="2"/>
</dbReference>
<dbReference type="PIRSF" id="PIRSF000533">
    <property type="entry name" value="ATP_PFK_euk"/>
    <property type="match status" value="1"/>
</dbReference>
<dbReference type="PRINTS" id="PR00476">
    <property type="entry name" value="PHFRCTKINASE"/>
</dbReference>
<dbReference type="SUPFAM" id="SSF53784">
    <property type="entry name" value="Phosphofructokinase"/>
    <property type="match status" value="2"/>
</dbReference>
<dbReference type="PROSITE" id="PS00433">
    <property type="entry name" value="PHOSPHOFRUCTOKINASE"/>
    <property type="match status" value="2"/>
</dbReference>
<feature type="chain" id="PRO_0000429718" description="ATP-dependent 6-phosphofructokinase 1">
    <location>
        <begin position="1"/>
        <end position="814"/>
    </location>
</feature>
<feature type="region of interest" description="N-terminal catalytic PFK domain 1">
    <location>
        <begin position="1"/>
        <end position="420"/>
    </location>
</feature>
<feature type="region of interest" description="Interdomain linker">
    <location>
        <begin position="421"/>
        <end position="435"/>
    </location>
</feature>
<feature type="region of interest" description="C-terminal regulatory PFK domain 2">
    <location>
        <begin position="436"/>
        <end position="814"/>
    </location>
</feature>
<feature type="active site" description="Proton acceptor" evidence="1">
    <location>
        <position position="196"/>
    </location>
</feature>
<feature type="binding site" evidence="1">
    <location>
        <position position="55"/>
    </location>
    <ligand>
        <name>ATP</name>
        <dbReference type="ChEBI" id="CHEBI:30616"/>
    </ligand>
</feature>
<feature type="binding site" evidence="1">
    <location>
        <begin position="118"/>
        <end position="119"/>
    </location>
    <ligand>
        <name>ATP</name>
        <dbReference type="ChEBI" id="CHEBI:30616"/>
    </ligand>
</feature>
<feature type="binding site" evidence="1">
    <location>
        <begin position="148"/>
        <end position="151"/>
    </location>
    <ligand>
        <name>ATP</name>
        <dbReference type="ChEBI" id="CHEBI:30616"/>
    </ligand>
</feature>
<feature type="binding site" evidence="1">
    <location>
        <position position="149"/>
    </location>
    <ligand>
        <name>Mg(2+)</name>
        <dbReference type="ChEBI" id="CHEBI:18420"/>
        <note>catalytic</note>
    </ligand>
</feature>
<feature type="binding site" description="in other chain" evidence="1">
    <location>
        <begin position="194"/>
        <end position="196"/>
    </location>
    <ligand>
        <name>substrate</name>
        <note>ligand shared between dimeric partners</note>
    </ligand>
</feature>
<feature type="binding site" evidence="1">
    <location>
        <position position="231"/>
    </location>
    <ligand>
        <name>substrate</name>
        <note>ligand shared between dimeric partners</note>
    </ligand>
</feature>
<feature type="binding site" description="in other chain" evidence="1">
    <location>
        <begin position="238"/>
        <end position="240"/>
    </location>
    <ligand>
        <name>substrate</name>
        <note>ligand shared between dimeric partners</note>
    </ligand>
</feature>
<feature type="binding site" description="in other chain" evidence="1">
    <location>
        <position position="294"/>
    </location>
    <ligand>
        <name>substrate</name>
        <note>ligand shared between dimeric partners</note>
    </ligand>
</feature>
<feature type="binding site" evidence="1">
    <location>
        <position position="322"/>
    </location>
    <ligand>
        <name>substrate</name>
        <note>ligand shared between dimeric partners</note>
    </ligand>
</feature>
<feature type="binding site" description="in other chain" evidence="1">
    <location>
        <begin position="328"/>
        <end position="331"/>
    </location>
    <ligand>
        <name>substrate</name>
        <note>ligand shared between dimeric partners</note>
    </ligand>
</feature>
<feature type="binding site" description="in other chain" evidence="1">
    <location>
        <position position="505"/>
    </location>
    <ligand>
        <name>beta-D-fructose 2,6-bisphosphate</name>
        <dbReference type="ChEBI" id="CHEBI:58579"/>
        <note>allosteric activator; ligand shared between dimeric partners</note>
    </ligand>
</feature>
<feature type="binding site" description="in other chain" evidence="1">
    <location>
        <begin position="563"/>
        <end position="567"/>
    </location>
    <ligand>
        <name>beta-D-fructose 2,6-bisphosphate</name>
        <dbReference type="ChEBI" id="CHEBI:58579"/>
        <note>allosteric activator; ligand shared between dimeric partners</note>
    </ligand>
</feature>
<feature type="binding site" evidence="1">
    <location>
        <position position="601"/>
    </location>
    <ligand>
        <name>beta-D-fructose 2,6-bisphosphate</name>
        <dbReference type="ChEBI" id="CHEBI:58579"/>
        <note>allosteric activator; ligand shared between dimeric partners</note>
    </ligand>
</feature>
<feature type="binding site" description="in other chain" evidence="1">
    <location>
        <begin position="608"/>
        <end position="610"/>
    </location>
    <ligand>
        <name>beta-D-fructose 2,6-bisphosphate</name>
        <dbReference type="ChEBI" id="CHEBI:58579"/>
        <note>allosteric activator; ligand shared between dimeric partners</note>
    </ligand>
</feature>
<feature type="binding site" description="in other chain" evidence="1">
    <location>
        <position position="664"/>
    </location>
    <ligand>
        <name>beta-D-fructose 2,6-bisphosphate</name>
        <dbReference type="ChEBI" id="CHEBI:58579"/>
        <note>allosteric activator; ligand shared between dimeric partners</note>
    </ligand>
</feature>
<feature type="binding site" evidence="1">
    <location>
        <position position="690"/>
    </location>
    <ligand>
        <name>beta-D-fructose 2,6-bisphosphate</name>
        <dbReference type="ChEBI" id="CHEBI:58579"/>
        <note>allosteric activator; ligand shared between dimeric partners</note>
    </ligand>
</feature>
<feature type="binding site" description="in other chain" evidence="1">
    <location>
        <begin position="696"/>
        <end position="699"/>
    </location>
    <ligand>
        <name>beta-D-fructose 2,6-bisphosphate</name>
        <dbReference type="ChEBI" id="CHEBI:58579"/>
        <note>allosteric activator; ligand shared between dimeric partners</note>
    </ligand>
</feature>
<feature type="binding site" description="in other chain" evidence="1">
    <location>
        <position position="771"/>
    </location>
    <ligand>
        <name>beta-D-fructose 2,6-bisphosphate</name>
        <dbReference type="ChEBI" id="CHEBI:58579"/>
        <note>allosteric activator; ligand shared between dimeric partners</note>
    </ligand>
</feature>
<sequence>MDADASTITPEELDFIRQRALRRFDSIVPTAGREGTEIASDIFKGRTLAIYTSGGDSQGMNSAVRSITRMAIYCGCKVYLIYEGYEGMIEGGDFIKEATWNTVSDIIQQGGTIIGSARSSEFRTREGRLKAATNLINRGIGRLVCIGGDGSLTGANTFRLEWTDLVQELVKNQRVTAAAAKKIPYIQIVGLVGSIDNDFCGTDMTIGTDSALQRIISSIDAVVATAQSHQRAFVIEVMGRHCGYLALVAALASEADFCFIPEWPAPENWRDVLCDKLSQMRSEGQRLNIIIVAEGAIDRDGKAITAEDVKTAVKEKLKYDTRVTILGHVQRGGAPSAFDRLLGCRMGAEAVFALMEMTEESEPCVISIDGNVMVRVPLLKCVERTQMVQKAMADKDWTTAVMLRGRSFQRNLETYKLLTKMRTVEKDNLSEGHKFNVAVINVGAPAGGMNAAVRSYVRMALYHQCTVYGIEDSFEGLANGSFKQFKWSDVTNWAMNGGSFLGTQKSLPTEKTMPQLAAQLKKHNIQALLLVGGFEAYHSTIILAENREKYPEFCIPMCVIPCTISNNVPGTMVSLGSDTAINEICQMIDKIKQSATGTKRRVFIVETMGGYCGYLATLSALSSGADNAYIFEEPFTVQDLSDDVDVILSKMEVGAKRYLVVRNEWADKNLTTDFVQNLFDSEGKKNFTTRVNVLGHVQQGGSPTPFDRNMGTKLAARALEFLLIQLKENLTADNKVIAKSAHTATLLGLKGRKVVFTPVQDLKKETDFEHRLPSEQWWMALRPLLRVLARHRSTVESSAILESVEEESADSHMF</sequence>
<comment type="function">
    <text evidence="1">Catalyzes the phosphorylation of D-fructose 6-phosphate to fructose 1,6-bisphosphate by ATP, the first committing step of glycolysis.</text>
</comment>
<comment type="catalytic activity">
    <reaction evidence="1">
        <text>beta-D-fructose 6-phosphate + ATP = beta-D-fructose 1,6-bisphosphate + ADP + H(+)</text>
        <dbReference type="Rhea" id="RHEA:16109"/>
        <dbReference type="ChEBI" id="CHEBI:15378"/>
        <dbReference type="ChEBI" id="CHEBI:30616"/>
        <dbReference type="ChEBI" id="CHEBI:32966"/>
        <dbReference type="ChEBI" id="CHEBI:57634"/>
        <dbReference type="ChEBI" id="CHEBI:456216"/>
        <dbReference type="EC" id="2.7.1.11"/>
    </reaction>
</comment>
<comment type="cofactor">
    <cofactor evidence="1">
        <name>Mg(2+)</name>
        <dbReference type="ChEBI" id="CHEBI:18420"/>
    </cofactor>
</comment>
<comment type="activity regulation">
    <text evidence="1">Allosterically activated by ADP, AMP, or fructose 2,6-bisphosphate, and allosterically inhibited by ATP or citrate.</text>
</comment>
<comment type="pathway">
    <text evidence="1">Carbohydrate degradation; glycolysis; D-glyceraldehyde 3-phosphate and glycerone phosphate from D-glucose: step 3/4.</text>
</comment>
<comment type="subunit">
    <text evidence="1">Homotetramer.</text>
</comment>
<comment type="subcellular location">
    <subcellularLocation>
        <location evidence="1">Cytoplasm</location>
    </subcellularLocation>
</comment>
<comment type="similarity">
    <text evidence="1">Belongs to the phosphofructokinase type A (PFKA) family. ATP-dependent PFK group I subfamily. Eukaryotic two domain clade 'E' sub-subfamily.</text>
</comment>
<proteinExistence type="inferred from homology"/>
<evidence type="ECO:0000255" key="1">
    <source>
        <dbReference type="HAMAP-Rule" id="MF_03184"/>
    </source>
</evidence>
<evidence type="ECO:0000312" key="2">
    <source>
        <dbReference type="WormBase" id="Y71H10A.1a"/>
    </source>
</evidence>
<reference key="1">
    <citation type="journal article" date="1998" name="Science">
        <title>Genome sequence of the nematode C. elegans: a platform for investigating biology.</title>
        <authorList>
            <consortium name="The C. elegans sequencing consortium"/>
        </authorList>
    </citation>
    <scope>NUCLEOTIDE SEQUENCE [LARGE SCALE GENOMIC DNA]</scope>
    <source>
        <strain>Bristol N2</strain>
    </source>
</reference>